<organism>
    <name type="scientific">Chlamydia pneumoniae</name>
    <name type="common">Chlamydophila pneumoniae</name>
    <dbReference type="NCBI Taxonomy" id="83558"/>
    <lineage>
        <taxon>Bacteria</taxon>
        <taxon>Pseudomonadati</taxon>
        <taxon>Chlamydiota</taxon>
        <taxon>Chlamydiia</taxon>
        <taxon>Chlamydiales</taxon>
        <taxon>Chlamydiaceae</taxon>
        <taxon>Chlamydia/Chlamydophila group</taxon>
        <taxon>Chlamydia</taxon>
    </lineage>
</organism>
<name>Y572_CHLPN</name>
<accession>Q9Z7Y1</accession>
<protein>
    <recommendedName>
        <fullName>Uncharacterized protein CPn_0572/CP_0177/CPj0572/CpB0594</fullName>
    </recommendedName>
</protein>
<reference key="1">
    <citation type="journal article" date="1999" name="Nat. Genet.">
        <title>Comparative genomes of Chlamydia pneumoniae and C. trachomatis.</title>
        <authorList>
            <person name="Kalman S."/>
            <person name="Mitchell W.P."/>
            <person name="Marathe R."/>
            <person name="Lammel C.J."/>
            <person name="Fan J."/>
            <person name="Hyman R.W."/>
            <person name="Olinger L."/>
            <person name="Grimwood J."/>
            <person name="Davis R.W."/>
            <person name="Stephens R.S."/>
        </authorList>
    </citation>
    <scope>NUCLEOTIDE SEQUENCE [LARGE SCALE GENOMIC DNA]</scope>
    <source>
        <strain>CWL029</strain>
    </source>
</reference>
<reference key="2">
    <citation type="journal article" date="2000" name="Nucleic Acids Res.">
        <title>Genome sequences of Chlamydia trachomatis MoPn and Chlamydia pneumoniae AR39.</title>
        <authorList>
            <person name="Read T.D."/>
            <person name="Brunham R.C."/>
            <person name="Shen C."/>
            <person name="Gill S.R."/>
            <person name="Heidelberg J.F."/>
            <person name="White O."/>
            <person name="Hickey E.K."/>
            <person name="Peterson J.D."/>
            <person name="Utterback T.R."/>
            <person name="Berry K.J."/>
            <person name="Bass S."/>
            <person name="Linher K.D."/>
            <person name="Weidman J.F."/>
            <person name="Khouri H.M."/>
            <person name="Craven B."/>
            <person name="Bowman C."/>
            <person name="Dodson R.J."/>
            <person name="Gwinn M.L."/>
            <person name="Nelson W.C."/>
            <person name="DeBoy R.T."/>
            <person name="Kolonay J.F."/>
            <person name="McClarty G."/>
            <person name="Salzberg S.L."/>
            <person name="Eisen J.A."/>
            <person name="Fraser C.M."/>
        </authorList>
    </citation>
    <scope>NUCLEOTIDE SEQUENCE [LARGE SCALE GENOMIC DNA]</scope>
    <source>
        <strain>AR39</strain>
    </source>
</reference>
<reference key="3">
    <citation type="journal article" date="2000" name="Nucleic Acids Res.">
        <title>Comparison of whole genome sequences of Chlamydia pneumoniae J138 from Japan and CWL029 from USA.</title>
        <authorList>
            <person name="Shirai M."/>
            <person name="Hirakawa H."/>
            <person name="Kimoto M."/>
            <person name="Tabuchi M."/>
            <person name="Kishi F."/>
            <person name="Ouchi K."/>
            <person name="Shiba T."/>
            <person name="Ishii K."/>
            <person name="Hattori M."/>
            <person name="Kuhara S."/>
            <person name="Nakazawa T."/>
        </authorList>
    </citation>
    <scope>NUCLEOTIDE SEQUENCE [LARGE SCALE GENOMIC DNA]</scope>
    <source>
        <strain>J138</strain>
    </source>
</reference>
<reference key="4">
    <citation type="submission" date="2002-05" db="EMBL/GenBank/DDBJ databases">
        <title>The genome sequence of Chlamydia pneumoniae TW183 and comparison with other Chlamydia strains based on whole genome sequence analysis.</title>
        <authorList>
            <person name="Geng M.M."/>
            <person name="Schuhmacher A."/>
            <person name="Muehldorfer I."/>
            <person name="Bensch K.W."/>
            <person name="Schaefer K.P."/>
            <person name="Schneider S."/>
            <person name="Pohl T."/>
            <person name="Essig A."/>
            <person name="Marre R."/>
            <person name="Melchers K."/>
        </authorList>
    </citation>
    <scope>NUCLEOTIDE SEQUENCE [LARGE SCALE GENOMIC DNA]</scope>
    <source>
        <strain>TW-183</strain>
    </source>
</reference>
<evidence type="ECO:0000256" key="1">
    <source>
        <dbReference type="SAM" id="MobiDB-lite"/>
    </source>
</evidence>
<evidence type="ECO:0000305" key="2"/>
<sequence length="755" mass="77579">MAAPINQPSTTTQITQTGQTTTTTTVGSLGEHSVTTTGSGAAAQTSQTVTLIADHEMQEIASQDGSAVSFSAEHSFSTLPPETGSVGATAQSAQSAGLFSLSGRTQRRDSEISSSSDGSSISRTSSNASSGETSRAESSPDLGDLDSLSGSERAEGAEGPEGPGGLPESTIPHYDPTDKASILNFLKNPAVQQKMQTKGGHFVYVDEARSSFIFVRNGDWSTAESIKVSNAKTKENITKPADLEMCIAKFCVGYETIHSDWTGRVKPTMEERSGATGNYNHLMLSMKFKTAVVYGPWNAKESSSGYTPSAWRRGAKVETGPIWDDVGGLKGINWKTTPAPDFSFINETPGGGAHSTSHTGPGTPVGATVVPNVNVNLGGIKVDLGGINLGGITTNVTTEEGGGTNITSTKSTSTDDKVSITSTGSQSTIEEDTIQFDDPGQGEDDNAIPGTNTPPPPGPPPNLSSSRLLTISNASLNQVLQNVRQHLNTAYDSNGNSVSDLNQDLGQVVKNSENGVNFPTVILPKTTGDTDPSGQATGGVTEGGGHIRNIIQRNTQSTGQSEGATPTPQPTIAKIVTSLRKANVSSSSVLPQPQVATTITPQARTASTSTTSIGTGTESTSTTSTGTGTGSVSTQSTGVGTPTTTTRSTGTSATTTTSSASTQTPQAPLPSGTRHVATISLVRNAAGRSIVLQQGGRSQSFPIPPSGTGTQNMGAQLWAAASQVASTLGQVVNQAATAGSQPSSRRSSPTSPRRK</sequence>
<gene>
    <name type="ordered locus">CPn_0572</name>
    <name type="ordered locus">CP_0177</name>
    <name type="ordered locus">CPj0572</name>
    <name type="ordered locus">CpB0594</name>
</gene>
<proteinExistence type="inferred from homology"/>
<feature type="chain" id="PRO_0000218399" description="Uncharacterized protein CPn_0572/CP_0177/CPj0572/CpB0594">
    <location>
        <begin position="1"/>
        <end position="755"/>
    </location>
</feature>
<feature type="region of interest" description="Disordered" evidence="1">
    <location>
        <begin position="1"/>
        <end position="44"/>
    </location>
</feature>
<feature type="region of interest" description="Disordered" evidence="1">
    <location>
        <begin position="72"/>
        <end position="91"/>
    </location>
</feature>
<feature type="region of interest" description="Disordered" evidence="1">
    <location>
        <begin position="99"/>
        <end position="174"/>
    </location>
</feature>
<feature type="region of interest" description="Disordered" evidence="1">
    <location>
        <begin position="393"/>
        <end position="467"/>
    </location>
</feature>
<feature type="region of interest" description="Disordered" evidence="1">
    <location>
        <begin position="523"/>
        <end position="545"/>
    </location>
</feature>
<feature type="region of interest" description="Disordered" evidence="1">
    <location>
        <begin position="584"/>
        <end position="672"/>
    </location>
</feature>
<feature type="region of interest" description="Disordered" evidence="1">
    <location>
        <begin position="734"/>
        <end position="755"/>
    </location>
</feature>
<feature type="compositionally biased region" description="Low complexity" evidence="1">
    <location>
        <begin position="10"/>
        <end position="25"/>
    </location>
</feature>
<feature type="compositionally biased region" description="Low complexity" evidence="1">
    <location>
        <begin position="35"/>
        <end position="44"/>
    </location>
</feature>
<feature type="compositionally biased region" description="Low complexity" evidence="1">
    <location>
        <begin position="112"/>
        <end position="130"/>
    </location>
</feature>
<feature type="compositionally biased region" description="Low complexity" evidence="1">
    <location>
        <begin position="139"/>
        <end position="151"/>
    </location>
</feature>
<feature type="compositionally biased region" description="Low complexity" evidence="1">
    <location>
        <begin position="393"/>
        <end position="412"/>
    </location>
</feature>
<feature type="compositionally biased region" description="Acidic residues" evidence="1">
    <location>
        <begin position="429"/>
        <end position="446"/>
    </location>
</feature>
<feature type="compositionally biased region" description="Pro residues" evidence="1">
    <location>
        <begin position="452"/>
        <end position="462"/>
    </location>
</feature>
<feature type="compositionally biased region" description="Gly residues" evidence="1">
    <location>
        <begin position="536"/>
        <end position="545"/>
    </location>
</feature>
<feature type="compositionally biased region" description="Polar residues" evidence="1">
    <location>
        <begin position="590"/>
        <end position="599"/>
    </location>
</feature>
<feature type="compositionally biased region" description="Low complexity" evidence="1">
    <location>
        <begin position="600"/>
        <end position="666"/>
    </location>
</feature>
<feature type="compositionally biased region" description="Low complexity" evidence="1">
    <location>
        <begin position="740"/>
        <end position="755"/>
    </location>
</feature>
<comment type="similarity">
    <text evidence="2">Belongs to the chlamydial CPn_0572/CT_456/TC_0741 family.</text>
</comment>
<dbReference type="EMBL" id="AE001363">
    <property type="protein sequence ID" value="AAD18712.1"/>
    <property type="molecule type" value="Genomic_DNA"/>
</dbReference>
<dbReference type="EMBL" id="AE002161">
    <property type="protein sequence ID" value="AAF38051.1"/>
    <property type="molecule type" value="Genomic_DNA"/>
</dbReference>
<dbReference type="EMBL" id="BA000008">
    <property type="protein sequence ID" value="BAA98778.1"/>
    <property type="molecule type" value="Genomic_DNA"/>
</dbReference>
<dbReference type="EMBL" id="AE009440">
    <property type="protein sequence ID" value="AAP98523.1"/>
    <property type="molecule type" value="Genomic_DNA"/>
</dbReference>
<dbReference type="PIR" id="B72061">
    <property type="entry name" value="B72061"/>
</dbReference>
<dbReference type="PIR" id="H86561">
    <property type="entry name" value="H86561"/>
</dbReference>
<dbReference type="RefSeq" id="NP_224768.1">
    <property type="nucleotide sequence ID" value="NC_000922.1"/>
</dbReference>
<dbReference type="GeneID" id="45050616"/>
<dbReference type="KEGG" id="cpa:CP_0177"/>
<dbReference type="KEGG" id="cpj:CPj0572"/>
<dbReference type="KEGG" id="cpn:CPn_0572"/>
<dbReference type="KEGG" id="cpt:CpB0594"/>
<dbReference type="PATRIC" id="fig|115713.3.peg.637"/>
<dbReference type="HOGENOM" id="CLU_011849_0_0_0"/>
<dbReference type="OrthoDB" id="16908at2"/>
<dbReference type="Proteomes" id="UP000000583">
    <property type="component" value="Chromosome"/>
</dbReference>
<dbReference type="Proteomes" id="UP000000801">
    <property type="component" value="Chromosome"/>
</dbReference>
<dbReference type="NCBIfam" id="NF033567">
    <property type="entry name" value="act_recrut_TARP"/>
    <property type="match status" value="1"/>
</dbReference>